<reference key="1">
    <citation type="journal article" date="2010" name="Science">
        <title>The genome of the Western clawed frog Xenopus tropicalis.</title>
        <authorList>
            <person name="Hellsten U."/>
            <person name="Harland R.M."/>
            <person name="Gilchrist M.J."/>
            <person name="Hendrix D."/>
            <person name="Jurka J."/>
            <person name="Kapitonov V."/>
            <person name="Ovcharenko I."/>
            <person name="Putnam N.H."/>
            <person name="Shu S."/>
            <person name="Taher L."/>
            <person name="Blitz I.L."/>
            <person name="Blumberg B."/>
            <person name="Dichmann D.S."/>
            <person name="Dubchak I."/>
            <person name="Amaya E."/>
            <person name="Detter J.C."/>
            <person name="Fletcher R."/>
            <person name="Gerhard D.S."/>
            <person name="Goodstein D."/>
            <person name="Graves T."/>
            <person name="Grigoriev I.V."/>
            <person name="Grimwood J."/>
            <person name="Kawashima T."/>
            <person name="Lindquist E."/>
            <person name="Lucas S.M."/>
            <person name="Mead P.E."/>
            <person name="Mitros T."/>
            <person name="Ogino H."/>
            <person name="Ohta Y."/>
            <person name="Poliakov A.V."/>
            <person name="Pollet N."/>
            <person name="Robert J."/>
            <person name="Salamov A."/>
            <person name="Sater A.K."/>
            <person name="Schmutz J."/>
            <person name="Terry A."/>
            <person name="Vize P.D."/>
            <person name="Warren W.C."/>
            <person name="Wells D."/>
            <person name="Wills A."/>
            <person name="Wilson R.K."/>
            <person name="Zimmerman L.B."/>
            <person name="Zorn A.M."/>
            <person name="Grainger R."/>
            <person name="Grammer T."/>
            <person name="Khokha M.K."/>
            <person name="Richardson P.M."/>
            <person name="Rokhsar D.S."/>
        </authorList>
    </citation>
    <scope>NUCLEOTIDE SEQUENCE [LARGE SCALE GENOMIC DNA]</scope>
</reference>
<reference key="2">
    <citation type="submission" date="2007-02" db="EMBL/GenBank/DDBJ databases">
        <authorList>
            <consortium name="NIH - Xenopus Gene Collection (XGC) project"/>
        </authorList>
    </citation>
    <scope>NUCLEOTIDE SEQUENCE [LARGE SCALE MRNA]</scope>
    <source>
        <tissue>Testis</tissue>
    </source>
</reference>
<reference key="3">
    <citation type="journal article" date="2013" name="Nature">
        <title>The heterotaxy gene GALNT11 glycosylates Notch to orchestrate cilia type and laterality.</title>
        <authorList>
            <person name="Boskovski M.T."/>
            <person name="Yuan S."/>
            <person name="Pedersen N.B."/>
            <person name="Goth C.K."/>
            <person name="Makova S."/>
            <person name="Clausen H."/>
            <person name="Brueckner M."/>
            <person name="Khokha M.K."/>
        </authorList>
    </citation>
    <scope>FUNCTION</scope>
    <scope>GLYCOSYLATION AT THR-231 AND THR-1400</scope>
</reference>
<evidence type="ECO:0000250" key="1"/>
<evidence type="ECO:0000250" key="2">
    <source>
        <dbReference type="UniProtKB" id="P46531"/>
    </source>
</evidence>
<evidence type="ECO:0000250" key="3">
    <source>
        <dbReference type="UniProtKB" id="Q01705"/>
    </source>
</evidence>
<evidence type="ECO:0000250" key="4">
    <source>
        <dbReference type="UniProtKB" id="Q07008"/>
    </source>
</evidence>
<evidence type="ECO:0000255" key="5"/>
<evidence type="ECO:0000255" key="6">
    <source>
        <dbReference type="PROSITE-ProRule" id="PRU00076"/>
    </source>
</evidence>
<evidence type="ECO:0000255" key="7">
    <source>
        <dbReference type="PROSITE-ProRule" id="PRU00525"/>
    </source>
</evidence>
<evidence type="ECO:0000256" key="8">
    <source>
        <dbReference type="SAM" id="MobiDB-lite"/>
    </source>
</evidence>
<evidence type="ECO:0000269" key="9">
    <source>
    </source>
</evidence>
<evidence type="ECO:0000305" key="10"/>
<name>NOTC1_XENTR</name>
<comment type="function">
    <text evidence="3 9">Functions as a receptor for membrane-bound ligands Jagged-1 (JAG1), Jagged-2 (JAG2) and Delta-1 (DLL1) to regulate cell-fate determination. Upon ligand activation through the released notch intracellular domain (NICD) it forms a transcriptional activator complex with RBPJ/RBPSUH and activates genes of the enhancer of split locus. Affects the implementation of differentiation, proliferation and apoptotic programs. Involved in angiogenesis; negatively regulates endothelial cell proliferation and migration and angiogenic sprouting. Involved in the maturation of both CD4(+) and CD8(+) cells in the thymus. Important for follicular differentiation and possibly cell fate selection within the follicle. During cerebellar development, functions as a receptor for neuronal DNER and is involved in the differentiation of Bergmann glia. Represses neuronal and myogenic differentiation. May play an essential role in postimplantation development, probably in some aspect of cell specification and/or differentiation. May be involved in mesoderm development, somite formation and neurogenesis (By similarity). Involved in determination of left/right symmetry by modulating the balance between motile and immotile (sensory) cilia at the left-right organiser (LRO).</text>
</comment>
<comment type="subcellular location">
    <subcellularLocation>
        <location evidence="3">Cell membrane</location>
        <topology evidence="3">Single-pass type I membrane protein</topology>
    </subcellularLocation>
</comment>
<comment type="subcellular location">
    <molecule>Notch 1 intracellular domain</molecule>
    <subcellularLocation>
        <location evidence="3">Nucleus</location>
    </subcellularLocation>
    <text evidence="3">Following proteolytical processing NICD is translocated to the nucleus.</text>
</comment>
<comment type="PTM">
    <text evidence="9">O-glycosylated on the EGF-like domains. Contains both O-linked fucose and O-linked glucose. O-linked glycosylation by galnt11 is involved in determination of left/right symmetry: glycosylation promotes activation of notch1, possibly by promoting cleavage by adam17, modulating the balance between motile and immotile (sensory) cilia at the left-right organiser (LRO).</text>
</comment>
<comment type="PTM">
    <text evidence="3">Synthesized in the endoplasmic reticulum as an inactive form which is proteolytically cleaved by a furin-like convertase in the trans-Golgi network before it reaches the plasma membrane to yield an active, ligand-accessible form. Cleavage results in a C-terminal fragment N(TM) and a N-terminal fragment N(EC). Following ligand binding, it is cleaved by adam17 to yield a membrane-associated intermediate fragment called notch extracellular truncation (NEXT). Following endocytosis, this fragment is then cleaved by presenilin dependent gamma-secretase to release a Notch-derived peptide containing the intracellular domain (NICD) from the membrane (By similarity).</text>
</comment>
<comment type="similarity">
    <text evidence="10">Belongs to the NOTCH family.</text>
</comment>
<organism>
    <name type="scientific">Xenopus tropicalis</name>
    <name type="common">Western clawed frog</name>
    <name type="synonym">Silurana tropicalis</name>
    <dbReference type="NCBI Taxonomy" id="8364"/>
    <lineage>
        <taxon>Eukaryota</taxon>
        <taxon>Metazoa</taxon>
        <taxon>Chordata</taxon>
        <taxon>Craniata</taxon>
        <taxon>Vertebrata</taxon>
        <taxon>Euteleostomi</taxon>
        <taxon>Amphibia</taxon>
        <taxon>Batrachia</taxon>
        <taxon>Anura</taxon>
        <taxon>Pipoidea</taxon>
        <taxon>Pipidae</taxon>
        <taxon>Xenopodinae</taxon>
        <taxon>Xenopus</taxon>
        <taxon>Silurana</taxon>
    </lineage>
</organism>
<feature type="signal peptide" evidence="5">
    <location>
        <begin position="1"/>
        <end position="19"/>
    </location>
</feature>
<feature type="chain" id="PRO_0000425209" description="Neurogenic locus notch homolog protein 1" evidence="1">
    <location>
        <begin position="20"/>
        <end position="2522"/>
    </location>
</feature>
<feature type="chain" id="PRO_0000425210" description="Notch 1 extracellular truncation" evidence="1">
    <location>
        <begin position="1715"/>
        <end position="2522"/>
    </location>
</feature>
<feature type="chain" id="PRO_0000425211" description="Notch 1 intracellular domain" evidence="1">
    <location>
        <begin position="1749"/>
        <end position="2522"/>
    </location>
</feature>
<feature type="topological domain" description="Extracellular" evidence="10">
    <location>
        <begin position="20"/>
        <end position="1730"/>
    </location>
</feature>
<feature type="transmembrane region" description="Helical" evidence="2">
    <location>
        <begin position="1731"/>
        <end position="1751"/>
    </location>
</feature>
<feature type="topological domain" description="Cytoplasmic" evidence="10">
    <location>
        <begin position="1752"/>
        <end position="2522"/>
    </location>
</feature>
<feature type="domain" description="EGF-like 1" evidence="6">
    <location>
        <begin position="20"/>
        <end position="57"/>
    </location>
</feature>
<feature type="domain" description="EGF-like 2" evidence="6">
    <location>
        <begin position="58"/>
        <end position="99"/>
    </location>
</feature>
<feature type="domain" description="EGF-like 3" evidence="6">
    <location>
        <begin position="102"/>
        <end position="140"/>
    </location>
</feature>
<feature type="domain" description="EGF-like 4" evidence="6">
    <location>
        <begin position="141"/>
        <end position="177"/>
    </location>
</feature>
<feature type="domain" description="EGF-like 5; calcium-binding" evidence="6">
    <location>
        <begin position="179"/>
        <end position="215"/>
    </location>
</feature>
<feature type="domain" description="EGF-like 6" evidence="6">
    <location>
        <begin position="217"/>
        <end position="254"/>
    </location>
</feature>
<feature type="domain" description="EGF-like 7; calcium-binding" evidence="6">
    <location>
        <begin position="256"/>
        <end position="292"/>
    </location>
</feature>
<feature type="domain" description="EGF-like 8; calcium-binding" evidence="6">
    <location>
        <begin position="294"/>
        <end position="332"/>
    </location>
</feature>
<feature type="domain" description="EGF-like 9; calcium-binding" evidence="6">
    <location>
        <begin position="334"/>
        <end position="370"/>
    </location>
</feature>
<feature type="domain" description="EGF-like 10" evidence="6">
    <location>
        <begin position="371"/>
        <end position="409"/>
    </location>
</feature>
<feature type="domain" description="EGF-like 11; calcium-binding" evidence="6">
    <location>
        <begin position="411"/>
        <end position="449"/>
    </location>
</feature>
<feature type="domain" description="EGF-like 12; calcium-binding" evidence="6">
    <location>
        <begin position="451"/>
        <end position="487"/>
    </location>
</feature>
<feature type="domain" description="EGF-like 13; calcium-binding" evidence="6">
    <location>
        <begin position="489"/>
        <end position="525"/>
    </location>
</feature>
<feature type="domain" description="EGF-like 14; calcium-binding" evidence="6">
    <location>
        <begin position="527"/>
        <end position="563"/>
    </location>
</feature>
<feature type="domain" description="EGF-like 15; calcium-binding" evidence="6">
    <location>
        <begin position="565"/>
        <end position="600"/>
    </location>
</feature>
<feature type="domain" description="EGF-like 16; calcium-binding" evidence="6">
    <location>
        <begin position="602"/>
        <end position="638"/>
    </location>
</feature>
<feature type="domain" description="EGF-like 17; calcium-binding" evidence="6">
    <location>
        <begin position="640"/>
        <end position="675"/>
    </location>
</feature>
<feature type="domain" description="EGF-like 18; calcium-binding" evidence="6">
    <location>
        <begin position="677"/>
        <end position="713"/>
    </location>
</feature>
<feature type="domain" description="EGF-like 19; calcium-binding" evidence="6">
    <location>
        <begin position="715"/>
        <end position="750"/>
    </location>
</feature>
<feature type="domain" description="EGF-like 20; calcium-binding" evidence="6">
    <location>
        <begin position="752"/>
        <end position="788"/>
    </location>
</feature>
<feature type="domain" description="EGF-like 21; calcium-binding" evidence="6">
    <location>
        <begin position="790"/>
        <end position="826"/>
    </location>
</feature>
<feature type="domain" description="EGF-like 22" evidence="6">
    <location>
        <begin position="828"/>
        <end position="866"/>
    </location>
</feature>
<feature type="domain" description="EGF-like 23; calcium-binding" evidence="6">
    <location>
        <begin position="868"/>
        <end position="904"/>
    </location>
</feature>
<feature type="domain" description="EGF-like 24; calcium-binding" evidence="6">
    <location>
        <begin position="906"/>
        <end position="942"/>
    </location>
</feature>
<feature type="domain" description="EGF-like 25; calcium-binding" evidence="6">
    <location>
        <begin position="944"/>
        <end position="980"/>
    </location>
</feature>
<feature type="domain" description="EGF-like 26" evidence="6">
    <location>
        <begin position="982"/>
        <end position="1018"/>
    </location>
</feature>
<feature type="domain" description="EGF-like 27; calcium-binding" evidence="6">
    <location>
        <begin position="1020"/>
        <end position="1056"/>
    </location>
</feature>
<feature type="domain" description="EGF-like 28" evidence="6">
    <location>
        <begin position="1058"/>
        <end position="1094"/>
    </location>
</feature>
<feature type="domain" description="EGF-like 29" evidence="10">
    <location>
        <begin position="1096"/>
        <end position="1142"/>
    </location>
</feature>
<feature type="domain" description="EGF-like 30; calcium-binding" evidence="6">
    <location>
        <begin position="1144"/>
        <end position="1180"/>
    </location>
</feature>
<feature type="domain" description="EGF-like 31; calcium-binding" evidence="6">
    <location>
        <begin position="1182"/>
        <end position="1218"/>
    </location>
</feature>
<feature type="domain" description="EGF-like 32; calcium-binding" evidence="6">
    <location>
        <begin position="1220"/>
        <end position="1264"/>
    </location>
</feature>
<feature type="domain" description="EGF-like 33" evidence="6">
    <location>
        <begin position="1266"/>
        <end position="1304"/>
    </location>
</feature>
<feature type="domain" description="EGF-like 34" evidence="6">
    <location>
        <begin position="1306"/>
        <end position="1345"/>
    </location>
</feature>
<feature type="domain" description="EGF-like 35" evidence="6">
    <location>
        <begin position="1347"/>
        <end position="1383"/>
    </location>
</feature>
<feature type="domain" description="EGF-like 36" evidence="6">
    <location>
        <begin position="1386"/>
        <end position="1424"/>
    </location>
</feature>
<feature type="repeat" description="LNR 1">
    <location>
        <begin position="1447"/>
        <end position="1487"/>
    </location>
</feature>
<feature type="repeat" description="LNR 2">
    <location>
        <begin position="1488"/>
        <end position="1529"/>
    </location>
</feature>
<feature type="repeat" description="LNR 3">
    <location>
        <begin position="1530"/>
        <end position="1564"/>
    </location>
</feature>
<feature type="repeat" description="ANK 1">
    <location>
        <begin position="1877"/>
        <end position="1920"/>
    </location>
</feature>
<feature type="repeat" description="ANK 2">
    <location>
        <begin position="1925"/>
        <end position="1954"/>
    </location>
</feature>
<feature type="repeat" description="ANK 3">
    <location>
        <begin position="1958"/>
        <end position="1988"/>
    </location>
</feature>
<feature type="repeat" description="ANK 4">
    <location>
        <begin position="1992"/>
        <end position="2021"/>
    </location>
</feature>
<feature type="repeat" description="ANK 5">
    <location>
        <begin position="2025"/>
        <end position="2054"/>
    </location>
</feature>
<feature type="repeat" description="ANK 6">
    <location>
        <begin position="2058"/>
        <end position="2087"/>
    </location>
</feature>
<feature type="region of interest" description="Disordered" evidence="8">
    <location>
        <begin position="2146"/>
        <end position="2229"/>
    </location>
</feature>
<feature type="region of interest" description="Disordered" evidence="8">
    <location>
        <begin position="2365"/>
        <end position="2404"/>
    </location>
</feature>
<feature type="region of interest" description="Disordered" evidence="8">
    <location>
        <begin position="2449"/>
        <end position="2522"/>
    </location>
</feature>
<feature type="compositionally biased region" description="Low complexity" evidence="8">
    <location>
        <begin position="2184"/>
        <end position="2200"/>
    </location>
</feature>
<feature type="compositionally biased region" description="Polar residues" evidence="8">
    <location>
        <begin position="2218"/>
        <end position="2229"/>
    </location>
</feature>
<feature type="compositionally biased region" description="Low complexity" evidence="8">
    <location>
        <begin position="2365"/>
        <end position="2390"/>
    </location>
</feature>
<feature type="compositionally biased region" description="Polar residues" evidence="8">
    <location>
        <begin position="2391"/>
        <end position="2404"/>
    </location>
</feature>
<feature type="compositionally biased region" description="Polar residues" evidence="8">
    <location>
        <begin position="2449"/>
        <end position="2469"/>
    </location>
</feature>
<feature type="compositionally biased region" description="Low complexity" evidence="8">
    <location>
        <begin position="2479"/>
        <end position="2494"/>
    </location>
</feature>
<feature type="compositionally biased region" description="Polar residues" evidence="8">
    <location>
        <begin position="2495"/>
        <end position="2514"/>
    </location>
</feature>
<feature type="binding site" evidence="4">
    <location>
        <position position="431"/>
    </location>
    <ligand>
        <name>Ca(2+)</name>
        <dbReference type="ChEBI" id="CHEBI:29108"/>
        <label>1</label>
    </ligand>
</feature>
<feature type="binding site" evidence="4">
    <location>
        <position position="434"/>
    </location>
    <ligand>
        <name>Ca(2+)</name>
        <dbReference type="ChEBI" id="CHEBI:29108"/>
        <label>1</label>
    </ligand>
</feature>
<feature type="binding site" evidence="4">
    <location>
        <position position="451"/>
    </location>
    <ligand>
        <name>Ca(2+)</name>
        <dbReference type="ChEBI" id="CHEBI:29108"/>
        <label>2</label>
    </ligand>
</feature>
<feature type="binding site" evidence="4">
    <location>
        <position position="452"/>
    </location>
    <ligand>
        <name>Ca(2+)</name>
        <dbReference type="ChEBI" id="CHEBI:29108"/>
        <label>2</label>
    </ligand>
</feature>
<feature type="binding site" evidence="4">
    <location>
        <position position="454"/>
    </location>
    <ligand>
        <name>Ca(2+)</name>
        <dbReference type="ChEBI" id="CHEBI:29108"/>
        <label>2</label>
    </ligand>
</feature>
<feature type="binding site" evidence="4">
    <location>
        <position position="468"/>
    </location>
    <ligand>
        <name>Ca(2+)</name>
        <dbReference type="ChEBI" id="CHEBI:29108"/>
        <label>2</label>
    </ligand>
</feature>
<feature type="binding site" evidence="4">
    <location>
        <position position="469"/>
    </location>
    <ligand>
        <name>Ca(2+)</name>
        <dbReference type="ChEBI" id="CHEBI:29108"/>
        <label>2</label>
    </ligand>
</feature>
<feature type="binding site" evidence="4">
    <location>
        <position position="489"/>
    </location>
    <ligand>
        <name>Ca(2+)</name>
        <dbReference type="ChEBI" id="CHEBI:29108"/>
        <label>3</label>
    </ligand>
</feature>
<feature type="binding site" evidence="4">
    <location>
        <position position="490"/>
    </location>
    <ligand>
        <name>Ca(2+)</name>
        <dbReference type="ChEBI" id="CHEBI:29108"/>
        <label>3</label>
    </ligand>
</feature>
<feature type="binding site" evidence="4">
    <location>
        <position position="492"/>
    </location>
    <ligand>
        <name>Ca(2+)</name>
        <dbReference type="ChEBI" id="CHEBI:29108"/>
        <label>3</label>
    </ligand>
</feature>
<feature type="binding site" evidence="4">
    <location>
        <position position="506"/>
    </location>
    <ligand>
        <name>Ca(2+)</name>
        <dbReference type="ChEBI" id="CHEBI:29108"/>
        <label>3</label>
    </ligand>
</feature>
<feature type="binding site" evidence="4">
    <location>
        <position position="507"/>
    </location>
    <ligand>
        <name>Ca(2+)</name>
        <dbReference type="ChEBI" id="CHEBI:29108"/>
        <label>3</label>
    </ligand>
</feature>
<feature type="binding site" evidence="7">
    <location>
        <position position="1458"/>
    </location>
    <ligand>
        <name>Ca(2+)</name>
        <dbReference type="ChEBI" id="CHEBI:29108"/>
        <label>4</label>
    </ligand>
</feature>
<feature type="binding site" evidence="7">
    <location>
        <position position="1473"/>
    </location>
    <ligand>
        <name>Ca(2+)</name>
        <dbReference type="ChEBI" id="CHEBI:29108"/>
        <label>4</label>
    </ligand>
</feature>
<feature type="binding site" evidence="7">
    <location>
        <position position="1476"/>
    </location>
    <ligand>
        <name>Ca(2+)</name>
        <dbReference type="ChEBI" id="CHEBI:29108"/>
        <label>4</label>
    </ligand>
</feature>
<feature type="binding site" evidence="7">
    <location>
        <position position="1500"/>
    </location>
    <ligand>
        <name>Ca(2+)</name>
        <dbReference type="ChEBI" id="CHEBI:29108"/>
        <label>5</label>
    </ligand>
</feature>
<feature type="binding site" evidence="7">
    <location>
        <position position="1515"/>
    </location>
    <ligand>
        <name>Ca(2+)</name>
        <dbReference type="ChEBI" id="CHEBI:29108"/>
        <label>5</label>
    </ligand>
</feature>
<feature type="binding site" evidence="7">
    <location>
        <position position="1518"/>
    </location>
    <ligand>
        <name>Ca(2+)</name>
        <dbReference type="ChEBI" id="CHEBI:29108"/>
        <label>5</label>
    </ligand>
</feature>
<feature type="binding site" evidence="7">
    <location>
        <position position="1540"/>
    </location>
    <ligand>
        <name>Ca(2+)</name>
        <dbReference type="ChEBI" id="CHEBI:29108"/>
        <label>6</label>
    </ligand>
</feature>
<feature type="binding site" evidence="7">
    <location>
        <position position="1555"/>
    </location>
    <ligand>
        <name>Ca(2+)</name>
        <dbReference type="ChEBI" id="CHEBI:29108"/>
        <label>6</label>
    </ligand>
</feature>
<feature type="binding site" evidence="7">
    <location>
        <position position="1558"/>
    </location>
    <ligand>
        <name>Ca(2+)</name>
        <dbReference type="ChEBI" id="CHEBI:29108"/>
        <label>6</label>
    </ligand>
</feature>
<feature type="site" description="Cleavage; by furin-like protease" evidence="3">
    <location>
        <begin position="1658"/>
        <end position="1659"/>
    </location>
</feature>
<feature type="site" description="Cleavage; by adam17" evidence="3">
    <location>
        <begin position="1714"/>
        <end position="1715"/>
    </location>
</feature>
<feature type="glycosylation site" description="O-linked (Fuc...) threonine; alternate" evidence="3">
    <location>
        <position position="231"/>
    </location>
</feature>
<feature type="glycosylation site" description="O-linked (GalNAc...) threonine; alternate" evidence="3">
    <location>
        <position position="231"/>
    </location>
</feature>
<feature type="glycosylation site" description="O-linked (Glc...) serine" evidence="4">
    <location>
        <position position="434"/>
    </location>
</feature>
<feature type="glycosylation site" description="O-linked (Glc...) serine" evidence="4">
    <location>
        <position position="457"/>
    </location>
</feature>
<feature type="glycosylation site" description="O-linked (Fuc...) threonine" evidence="4">
    <location>
        <position position="465"/>
    </location>
</feature>
<feature type="glycosylation site" description="O-linked (Glc...) serine" evidence="4">
    <location>
        <position position="495"/>
    </location>
</feature>
<feature type="glycosylation site" description="N-linked (GlcNAc...) asparagine" evidence="5">
    <location>
        <position position="887"/>
    </location>
</feature>
<feature type="glycosylation site" description="N-linked (GlcNAc...) asparagine" evidence="5">
    <location>
        <position position="958"/>
    </location>
</feature>
<feature type="glycosylation site" description="N-linked (GlcNAc...) asparagine" evidence="5">
    <location>
        <position position="1178"/>
    </location>
</feature>
<feature type="glycosylation site" description="O-linked (Fuc...) threonine; alternate" evidence="3">
    <location>
        <position position="1400"/>
    </location>
</feature>
<feature type="glycosylation site" description="O-linked (GalNAc...) threonine; alternate" evidence="3">
    <location>
        <position position="1400"/>
    </location>
</feature>
<feature type="glycosylation site" description="N-linked (GlcNAc...) asparagine" evidence="5">
    <location>
        <position position="1487"/>
    </location>
</feature>
<feature type="glycosylation site" description="N-linked (GlcNAc...) asparagine" evidence="5">
    <location>
        <position position="1508"/>
    </location>
</feature>
<feature type="glycosylation site" description="N-linked (GlcNAc...) asparagine" evidence="5">
    <location>
        <position position="1584"/>
    </location>
</feature>
<feature type="disulfide bond" evidence="1">
    <location>
        <begin position="22"/>
        <end position="35"/>
    </location>
</feature>
<feature type="disulfide bond" evidence="1">
    <location>
        <begin position="29"/>
        <end position="45"/>
    </location>
</feature>
<feature type="disulfide bond" evidence="1">
    <location>
        <begin position="47"/>
        <end position="56"/>
    </location>
</feature>
<feature type="disulfide bond" evidence="1">
    <location>
        <begin position="62"/>
        <end position="74"/>
    </location>
</feature>
<feature type="disulfide bond" evidence="1">
    <location>
        <begin position="68"/>
        <end position="87"/>
    </location>
</feature>
<feature type="disulfide bond" evidence="1">
    <location>
        <begin position="89"/>
        <end position="98"/>
    </location>
</feature>
<feature type="disulfide bond" evidence="1">
    <location>
        <begin position="106"/>
        <end position="117"/>
    </location>
</feature>
<feature type="disulfide bond" evidence="1">
    <location>
        <begin position="111"/>
        <end position="128"/>
    </location>
</feature>
<feature type="disulfide bond" evidence="1">
    <location>
        <begin position="130"/>
        <end position="139"/>
    </location>
</feature>
<feature type="disulfide bond" evidence="1">
    <location>
        <begin position="145"/>
        <end position="156"/>
    </location>
</feature>
<feature type="disulfide bond" evidence="1">
    <location>
        <begin position="150"/>
        <end position="165"/>
    </location>
</feature>
<feature type="disulfide bond" evidence="1">
    <location>
        <begin position="167"/>
        <end position="176"/>
    </location>
</feature>
<feature type="disulfide bond" evidence="1">
    <location>
        <begin position="183"/>
        <end position="194"/>
    </location>
</feature>
<feature type="disulfide bond" evidence="1">
    <location>
        <begin position="188"/>
        <end position="203"/>
    </location>
</feature>
<feature type="disulfide bond" evidence="1">
    <location>
        <begin position="205"/>
        <end position="214"/>
    </location>
</feature>
<feature type="disulfide bond" evidence="1">
    <location>
        <begin position="221"/>
        <end position="232"/>
    </location>
</feature>
<feature type="disulfide bond" evidence="1">
    <location>
        <begin position="226"/>
        <end position="242"/>
    </location>
</feature>
<feature type="disulfide bond" evidence="1">
    <location>
        <begin position="244"/>
        <end position="253"/>
    </location>
</feature>
<feature type="disulfide bond" evidence="1">
    <location>
        <begin position="260"/>
        <end position="271"/>
    </location>
</feature>
<feature type="disulfide bond" evidence="1">
    <location>
        <begin position="265"/>
        <end position="280"/>
    </location>
</feature>
<feature type="disulfide bond" evidence="1">
    <location>
        <begin position="282"/>
        <end position="291"/>
    </location>
</feature>
<feature type="disulfide bond" evidence="1">
    <location>
        <begin position="298"/>
        <end position="311"/>
    </location>
</feature>
<feature type="disulfide bond" evidence="1">
    <location>
        <begin position="305"/>
        <end position="320"/>
    </location>
</feature>
<feature type="disulfide bond" evidence="1">
    <location>
        <begin position="322"/>
        <end position="331"/>
    </location>
</feature>
<feature type="disulfide bond" evidence="1">
    <location>
        <begin position="338"/>
        <end position="349"/>
    </location>
</feature>
<feature type="disulfide bond" evidence="1">
    <location>
        <begin position="343"/>
        <end position="358"/>
    </location>
</feature>
<feature type="disulfide bond" evidence="1">
    <location>
        <begin position="360"/>
        <end position="369"/>
    </location>
</feature>
<feature type="disulfide bond" evidence="1">
    <location>
        <begin position="375"/>
        <end position="386"/>
    </location>
</feature>
<feature type="disulfide bond" evidence="1">
    <location>
        <begin position="380"/>
        <end position="397"/>
    </location>
</feature>
<feature type="disulfide bond" evidence="1">
    <location>
        <begin position="399"/>
        <end position="408"/>
    </location>
</feature>
<feature type="disulfide bond" evidence="4">
    <location>
        <begin position="415"/>
        <end position="428"/>
    </location>
</feature>
<feature type="disulfide bond" evidence="4">
    <location>
        <begin position="422"/>
        <end position="437"/>
    </location>
</feature>
<feature type="disulfide bond" evidence="4">
    <location>
        <begin position="439"/>
        <end position="448"/>
    </location>
</feature>
<feature type="disulfide bond" evidence="4">
    <location>
        <begin position="455"/>
        <end position="466"/>
    </location>
</feature>
<feature type="disulfide bond" evidence="4">
    <location>
        <begin position="460"/>
        <end position="475"/>
    </location>
</feature>
<feature type="disulfide bond" evidence="4">
    <location>
        <begin position="477"/>
        <end position="486"/>
    </location>
</feature>
<feature type="disulfide bond" evidence="4">
    <location>
        <begin position="493"/>
        <end position="504"/>
    </location>
</feature>
<feature type="disulfide bond" evidence="4">
    <location>
        <begin position="498"/>
        <end position="513"/>
    </location>
</feature>
<feature type="disulfide bond" evidence="4">
    <location>
        <begin position="515"/>
        <end position="524"/>
    </location>
</feature>
<feature type="disulfide bond" evidence="1">
    <location>
        <begin position="531"/>
        <end position="542"/>
    </location>
</feature>
<feature type="disulfide bond" evidence="1">
    <location>
        <begin position="536"/>
        <end position="551"/>
    </location>
</feature>
<feature type="disulfide bond" evidence="1">
    <location>
        <begin position="553"/>
        <end position="562"/>
    </location>
</feature>
<feature type="disulfide bond" evidence="1">
    <location>
        <begin position="569"/>
        <end position="579"/>
    </location>
</feature>
<feature type="disulfide bond" evidence="1">
    <location>
        <begin position="574"/>
        <end position="588"/>
    </location>
</feature>
<feature type="disulfide bond" evidence="1">
    <location>
        <begin position="590"/>
        <end position="599"/>
    </location>
</feature>
<feature type="disulfide bond" evidence="1">
    <location>
        <begin position="606"/>
        <end position="617"/>
    </location>
</feature>
<feature type="disulfide bond" evidence="1">
    <location>
        <begin position="611"/>
        <end position="626"/>
    </location>
</feature>
<feature type="disulfide bond" evidence="1">
    <location>
        <begin position="628"/>
        <end position="637"/>
    </location>
</feature>
<feature type="disulfide bond" evidence="1">
    <location>
        <begin position="644"/>
        <end position="654"/>
    </location>
</feature>
<feature type="disulfide bond" evidence="1">
    <location>
        <begin position="649"/>
        <end position="663"/>
    </location>
</feature>
<feature type="disulfide bond" evidence="1">
    <location>
        <begin position="665"/>
        <end position="674"/>
    </location>
</feature>
<feature type="disulfide bond" evidence="1">
    <location>
        <begin position="681"/>
        <end position="692"/>
    </location>
</feature>
<feature type="disulfide bond" evidence="1">
    <location>
        <begin position="686"/>
        <end position="701"/>
    </location>
</feature>
<feature type="disulfide bond" evidence="1">
    <location>
        <begin position="703"/>
        <end position="712"/>
    </location>
</feature>
<feature type="disulfide bond" evidence="1">
    <location>
        <begin position="719"/>
        <end position="729"/>
    </location>
</feature>
<feature type="disulfide bond" evidence="1">
    <location>
        <begin position="724"/>
        <end position="738"/>
    </location>
</feature>
<feature type="disulfide bond" evidence="1">
    <location>
        <begin position="740"/>
        <end position="749"/>
    </location>
</feature>
<feature type="disulfide bond" evidence="1">
    <location>
        <begin position="756"/>
        <end position="767"/>
    </location>
</feature>
<feature type="disulfide bond" evidence="1">
    <location>
        <begin position="761"/>
        <end position="776"/>
    </location>
</feature>
<feature type="disulfide bond" evidence="1">
    <location>
        <begin position="778"/>
        <end position="787"/>
    </location>
</feature>
<feature type="disulfide bond" evidence="1">
    <location>
        <begin position="794"/>
        <end position="805"/>
    </location>
</feature>
<feature type="disulfide bond" evidence="1">
    <location>
        <begin position="799"/>
        <end position="814"/>
    </location>
</feature>
<feature type="disulfide bond" evidence="1">
    <location>
        <begin position="816"/>
        <end position="825"/>
    </location>
</feature>
<feature type="disulfide bond" evidence="1">
    <location>
        <begin position="832"/>
        <end position="843"/>
    </location>
</feature>
<feature type="disulfide bond" evidence="1">
    <location>
        <begin position="837"/>
        <end position="854"/>
    </location>
</feature>
<feature type="disulfide bond" evidence="1">
    <location>
        <begin position="856"/>
        <end position="865"/>
    </location>
</feature>
<feature type="disulfide bond" evidence="1">
    <location>
        <begin position="872"/>
        <end position="883"/>
    </location>
</feature>
<feature type="disulfide bond" evidence="1">
    <location>
        <begin position="877"/>
        <end position="892"/>
    </location>
</feature>
<feature type="disulfide bond" evidence="1">
    <location>
        <begin position="894"/>
        <end position="903"/>
    </location>
</feature>
<feature type="disulfide bond" evidence="1">
    <location>
        <begin position="910"/>
        <end position="921"/>
    </location>
</feature>
<feature type="disulfide bond" evidence="1">
    <location>
        <begin position="915"/>
        <end position="930"/>
    </location>
</feature>
<feature type="disulfide bond" evidence="1">
    <location>
        <begin position="932"/>
        <end position="941"/>
    </location>
</feature>
<feature type="disulfide bond" evidence="1">
    <location>
        <begin position="948"/>
        <end position="959"/>
    </location>
</feature>
<feature type="disulfide bond" evidence="1">
    <location>
        <begin position="953"/>
        <end position="968"/>
    </location>
</feature>
<feature type="disulfide bond" evidence="1">
    <location>
        <begin position="970"/>
        <end position="979"/>
    </location>
</feature>
<feature type="disulfide bond" evidence="1">
    <location>
        <begin position="986"/>
        <end position="997"/>
    </location>
</feature>
<feature type="disulfide bond" evidence="1">
    <location>
        <begin position="991"/>
        <end position="1006"/>
    </location>
</feature>
<feature type="disulfide bond" evidence="1">
    <location>
        <begin position="1008"/>
        <end position="1017"/>
    </location>
</feature>
<feature type="disulfide bond" evidence="1">
    <location>
        <begin position="1024"/>
        <end position="1035"/>
    </location>
</feature>
<feature type="disulfide bond" evidence="1">
    <location>
        <begin position="1029"/>
        <end position="1044"/>
    </location>
</feature>
<feature type="disulfide bond" evidence="1">
    <location>
        <begin position="1046"/>
        <end position="1055"/>
    </location>
</feature>
<feature type="disulfide bond" evidence="1">
    <location>
        <begin position="1062"/>
        <end position="1073"/>
    </location>
</feature>
<feature type="disulfide bond" evidence="1">
    <location>
        <begin position="1067"/>
        <end position="1082"/>
    </location>
</feature>
<feature type="disulfide bond" evidence="1">
    <location>
        <begin position="1084"/>
        <end position="1093"/>
    </location>
</feature>
<feature type="disulfide bond" evidence="10">
    <location>
        <begin position="1100"/>
        <end position="1121"/>
    </location>
</feature>
<feature type="disulfide bond" evidence="1">
    <location>
        <begin position="1115"/>
        <end position="1130"/>
    </location>
</feature>
<feature type="disulfide bond" evidence="1">
    <location>
        <begin position="1132"/>
        <end position="1141"/>
    </location>
</feature>
<feature type="disulfide bond" evidence="1">
    <location>
        <begin position="1148"/>
        <end position="1159"/>
    </location>
</feature>
<feature type="disulfide bond" evidence="1">
    <location>
        <begin position="1153"/>
        <end position="1168"/>
    </location>
</feature>
<feature type="disulfide bond" evidence="1">
    <location>
        <begin position="1170"/>
        <end position="1179"/>
    </location>
</feature>
<feature type="disulfide bond" evidence="1">
    <location>
        <begin position="1186"/>
        <end position="1197"/>
    </location>
</feature>
<feature type="disulfide bond" evidence="1">
    <location>
        <begin position="1191"/>
        <end position="1206"/>
    </location>
</feature>
<feature type="disulfide bond" evidence="1">
    <location>
        <begin position="1208"/>
        <end position="1217"/>
    </location>
</feature>
<feature type="disulfide bond" evidence="1">
    <location>
        <begin position="1224"/>
        <end position="1243"/>
    </location>
</feature>
<feature type="disulfide bond" evidence="1">
    <location>
        <begin position="1237"/>
        <end position="1252"/>
    </location>
</feature>
<feature type="disulfide bond" evidence="1">
    <location>
        <begin position="1254"/>
        <end position="1263"/>
    </location>
</feature>
<feature type="disulfide bond" evidence="1">
    <location>
        <begin position="1270"/>
        <end position="1283"/>
    </location>
</feature>
<feature type="disulfide bond" evidence="1">
    <location>
        <begin position="1275"/>
        <end position="1292"/>
    </location>
</feature>
<feature type="disulfide bond" evidence="1">
    <location>
        <begin position="1294"/>
        <end position="1303"/>
    </location>
</feature>
<feature type="disulfide bond" evidence="1">
    <location>
        <begin position="1310"/>
        <end position="1321"/>
    </location>
</feature>
<feature type="disulfide bond" evidence="1">
    <location>
        <begin position="1315"/>
        <end position="1333"/>
    </location>
</feature>
<feature type="disulfide bond" evidence="1">
    <location>
        <begin position="1335"/>
        <end position="1344"/>
    </location>
</feature>
<feature type="disulfide bond" evidence="1">
    <location>
        <begin position="1351"/>
        <end position="1362"/>
    </location>
</feature>
<feature type="disulfide bond" evidence="1">
    <location>
        <begin position="1356"/>
        <end position="1371"/>
    </location>
</feature>
<feature type="disulfide bond" evidence="1">
    <location>
        <begin position="1373"/>
        <end position="1382"/>
    </location>
</feature>
<feature type="disulfide bond" evidence="1">
    <location>
        <begin position="1390"/>
        <end position="1401"/>
    </location>
</feature>
<feature type="disulfide bond" evidence="1">
    <location>
        <begin position="1395"/>
        <end position="1412"/>
    </location>
</feature>
<feature type="disulfide bond" evidence="1">
    <location>
        <begin position="1414"/>
        <end position="1423"/>
    </location>
</feature>
<feature type="disulfide bond" evidence="1">
    <location>
        <begin position="1447"/>
        <end position="1470"/>
    </location>
</feature>
<feature type="disulfide bond" evidence="1">
    <location>
        <begin position="1452"/>
        <end position="1465"/>
    </location>
</feature>
<feature type="disulfide bond" evidence="1">
    <location>
        <begin position="1461"/>
        <end position="1477"/>
    </location>
</feature>
<feature type="disulfide bond" evidence="1">
    <location>
        <begin position="1488"/>
        <end position="1512"/>
    </location>
</feature>
<feature type="disulfide bond" evidence="1">
    <location>
        <begin position="1494"/>
        <end position="1507"/>
    </location>
</feature>
<feature type="disulfide bond" evidence="1">
    <location>
        <begin position="1503"/>
        <end position="1519"/>
    </location>
</feature>
<feature type="disulfide bond" evidence="1">
    <location>
        <begin position="1534"/>
        <end position="1547"/>
    </location>
</feature>
<feature type="disulfide bond" evidence="1">
    <location>
        <begin position="1543"/>
        <end position="1559"/>
    </location>
</feature>
<feature type="sequence conflict" description="In Ref. 2; AAI33054." evidence="10" ref="2">
    <original>D</original>
    <variation>H</variation>
    <location>
        <position position="527"/>
    </location>
</feature>
<feature type="sequence conflict" description="In Ref. 2; AAI33054." evidence="10" ref="2">
    <original>N</original>
    <variation>D</variation>
    <location>
        <position position="1015"/>
    </location>
</feature>
<feature type="sequence conflict" description="In Ref. 2; AAI33054." evidence="10" ref="2">
    <original>F</original>
    <variation>I</variation>
    <location>
        <position position="1244"/>
    </location>
</feature>
<feature type="sequence conflict" description="In Ref. 2; AAI33054." evidence="10" ref="2">
    <original>L</original>
    <variation>P</variation>
    <location>
        <position position="2239"/>
    </location>
</feature>
<proteinExistence type="evidence at protein level"/>
<sequence length="2522" mass="274530">MYRIGLLVLIWSLLGLAQGLRCTQTAEMCLNGGRCEMTPGGTGVCLCSSSYFGERCQYPNPCALKNQCMNFGTCEPVLLGNAIDFTCHCPVGFTDKVCLTPVDNACVNNPCRNGGTCELLSSVSDYRCRCPPGWTGDSCQQADPCASNPCANGGKCLPFETQYICKCPSGFHGATCKQDINECSQNPCRNGGQCLNEFGSYRCNCQNRFTGRNCEEPYVPCNPSPCLNGGTCRQTDDTSYECTCLPGFSGQNCEENIDDCPSNNCRNGGTCVDGVNTYNCQCPPDWTGQYCTEDVDECQLMPNACQNGGTCHNTYGGYNCVCVNGWTGEDCSENIDDCANAACHSGATCHDRVASFFCECPHGRTGLLCHLDNACISNPCNEGSNCDTNPVNGKAICTCPPGYTGPACNNDVDECSLGANPCEHGGRCTNTLGSFQCNCPQGYAGPRCEIDVNECLSNPCQNDATCLDQIGEFQCICMPGYEGLYCETNIDECASNPCLHNGKCVDKINEFHCECPTGFNGNLCQHDVDECASTPCKNGAKCLDGPNSYTCQCTEGFTGRHCEQDINECIPDPCHYGTCKDGIATFTCLCRPGYTGRLCDNDINECLSQPCQNGGQCTDRENGYICTCPKGTTGVNCETNLDDCASNPCDYGKCIDKIDGYECTCEPGYTGKMCNINIDECASNPCRNGGTCKDKINGFTCVCPDGYHDHMCLSEVNECNSNPCIHGTCHDGINGYKCDCDAGWSGSNCDVNNNECESNPCMNGGTCKDMTGAYICTCRAGFSGPNCQTNINECASNPCLNRGTCIDDVAGYKCNCMLPYTGAICEAVLAPCSGSPCKNGGRCKESEDYETFSCECPPGWQGQTCEIDMNECVNRPCRNGAMCQNTNGSYKCNCKPGYAGRHCETDIDDCQPNPCHNGGSCSDGINMFFCNCPAGFRGPKCEEDINECASNPCKNGANCTDCVNSYTCTCQPGFSGIHCENNTPDCTESSCFNGGTCIDGINTFSCQCPPGFTGNYCQHDINECDSKPCLNGGTCQDSYGAYKCTCPQGYTGLNCQNLVRWCDSSPCKNGGKCWQTNNFYRCECKSGWTGVYCDVPSVSCEVAAKQQGVDIAHLCRNSGMCVDTGNTHFCRCQAGYTGSYCEEQVDECSPNPCQNGATCTDYLGGYSCECVAGYHGVNCSEEINECLSHPCHNGGTCIDLINTYKCSCPRGTQGVHCEINVDDCTPFYDSVSLEPKCFNNGKCFDRVGGYNCICPPGFVGERCEGDVNECLSNPCDPRGTQNCIQLVNDYRCECRQGFTGRRCDSVVDGCKGLPCRNGGTCAVASNTERGFICKCPPGFDGATCEYDARTCGNLRCQNGGTCISVLKSSKCVCSEGYTGATCQYPVVSPCASRPCYNGGTCQFSPEEPFFQCFCPTNFNGLFCHILDYGFIGGLGKNITPPDNEEICENEQCAELADNKICNANCNNHACGWDGGDCSLNFNDPWKNCTQSLQCWKYFNDGKCDSQCNNSGCLYDGFDCQKVEVQCNPLYDQYCRDHFQDGHCDQGCNNAECEWDGLDCDNMPENLAEGTLLIVVLMPPEKLKNNSVNFLRELSRVLHTNVVFKKDSKGEYKIYPYYGNEEELKKHHIKKRSAASWSDAPTAIFSTMKESVLPGRRRRELDQMEVRGSIVYLEIDNRQCYKSSSQCFTSATDVAAFLGALATHGNLNIPYKIEAVKSEIVETAKPPPPLYAMFSMLVIPLLIIFVIMVVIVNKKRRREHGQLWFPEGFIPKEPSKKKRREPLGEDSVGLKPLKNLTDGSFMDDNQNEWGDEETLENKRFRFEEQVMLPELVDDQTDHRQWTQQHLDAADLRIPSMAPTPPQGEIDADCMDVNVRGPDGFTPLMIAACSGGGLETGNSEEEEDASANMISDFIGQGAQLHNQTDRTGETALHLAARYARADAAKRLLESSADANVPDNMGRTPLHAAVAADAQGVFQILIRNRATDLDARMCDGTTPLILAARLAVEGMVEELINAHADVNAVDEFGKSALHWAAAVNNVDAAAVLLKSSANKDMQNNKEETPLFLAAREGSYETAKVLLDHYANRDITDHMDRLPRDIAQERMHHDIVHLLDEHNLVKSPTLHGGPLGAPTLSPPICSPNGYMGNMKPSVQSKKARKPSIKGNGCKEAKELKARRKKSQDGKTSLLDSGSSGVLSPVDSLESPHGYLSDVASPPLMTSPFQQSPSMPLNHLTSMQDSHLGLNHMTMANKQEMASNRMAFDGMTPRLTHLNVSSPNTIMTNGSMHFTVGGAPAMNGQCDWFARLQNGMVQNQYNPIRNGIQQGNAQQALQHGLMSSLHNGLPATTLSQMMTYQAMPNTRMANQPHLMQAQQMQQQQNLQLHQSVQQQQHQNSNATSTHIGSPFCSNDISQTDLQQMSGNNIHSVMPQDTQIFTNSLPPTLTQSMATTQFLTPPSQHSYSSPMDNTPSHQLQVPDHPFLTPSPESPDQWSSSSPHSNMSDWSEGISSPPTSMQPQRTHIPEAFK</sequence>
<gene>
    <name type="primary">notch1</name>
</gene>
<accession>A2RUV0</accession>
<accession>F7CY31</accession>
<protein>
    <recommendedName>
        <fullName>Neurogenic locus notch homolog protein 1</fullName>
        <shortName>Notch 1</shortName>
    </recommendedName>
    <component>
        <recommendedName>
            <fullName>Notch 1 extracellular truncation</fullName>
            <shortName>NEXT</shortName>
        </recommendedName>
    </component>
    <component>
        <recommendedName>
            <fullName>Notch 1 intracellular domain</fullName>
            <shortName>NICD</shortName>
        </recommendedName>
    </component>
</protein>
<keyword id="KW-0010">Activator</keyword>
<keyword id="KW-0037">Angiogenesis</keyword>
<keyword id="KW-0040">ANK repeat</keyword>
<keyword id="KW-0106">Calcium</keyword>
<keyword id="KW-1003">Cell membrane</keyword>
<keyword id="KW-0217">Developmental protein</keyword>
<keyword id="KW-0221">Differentiation</keyword>
<keyword id="KW-1015">Disulfide bond</keyword>
<keyword id="KW-0245">EGF-like domain</keyword>
<keyword id="KW-0325">Glycoprotein</keyword>
<keyword id="KW-0472">Membrane</keyword>
<keyword id="KW-0479">Metal-binding</keyword>
<keyword id="KW-0914">Notch signaling pathway</keyword>
<keyword id="KW-0539">Nucleus</keyword>
<keyword id="KW-0675">Receptor</keyword>
<keyword id="KW-1185">Reference proteome</keyword>
<keyword id="KW-0677">Repeat</keyword>
<keyword id="KW-0732">Signal</keyword>
<keyword id="KW-0804">Transcription</keyword>
<keyword id="KW-0805">Transcription regulation</keyword>
<keyword id="KW-0812">Transmembrane</keyword>
<keyword id="KW-1133">Transmembrane helix</keyword>
<dbReference type="EMBL" id="AAMC01043423">
    <property type="status" value="NOT_ANNOTATED_CDS"/>
    <property type="molecule type" value="Genomic_DNA"/>
</dbReference>
<dbReference type="EMBL" id="AAMC01043424">
    <property type="status" value="NOT_ANNOTATED_CDS"/>
    <property type="molecule type" value="Genomic_DNA"/>
</dbReference>
<dbReference type="EMBL" id="AAMC01043425">
    <property type="status" value="NOT_ANNOTATED_CDS"/>
    <property type="molecule type" value="Genomic_DNA"/>
</dbReference>
<dbReference type="EMBL" id="AAMC01043426">
    <property type="status" value="NOT_ANNOTATED_CDS"/>
    <property type="molecule type" value="Genomic_DNA"/>
</dbReference>
<dbReference type="EMBL" id="BC133053">
    <property type="protein sequence ID" value="AAI33054.1"/>
    <property type="molecule type" value="mRNA"/>
</dbReference>
<dbReference type="RefSeq" id="NP_001090757.1">
    <property type="nucleotide sequence ID" value="NM_001097288.1"/>
</dbReference>
<dbReference type="SMR" id="A2RUV0"/>
<dbReference type="FunCoup" id="A2RUV0">
    <property type="interactions" value="984"/>
</dbReference>
<dbReference type="STRING" id="8364.ENSXETP00000053343"/>
<dbReference type="GlyCosmos" id="A2RUV0">
    <property type="glycosylation" value="12 sites, No reported glycans"/>
</dbReference>
<dbReference type="PaxDb" id="8364-ENSXETP00000001676"/>
<dbReference type="GeneID" id="100037842"/>
<dbReference type="KEGG" id="xtr:100037842"/>
<dbReference type="AGR" id="Xenbase:XB-GENE-479318"/>
<dbReference type="CTD" id="4851"/>
<dbReference type="Xenbase" id="XB-GENE-479318">
    <property type="gene designation" value="notch1"/>
</dbReference>
<dbReference type="eggNOG" id="KOG1217">
    <property type="taxonomic scope" value="Eukaryota"/>
</dbReference>
<dbReference type="InParanoid" id="A2RUV0"/>
<dbReference type="OrthoDB" id="283575at2759"/>
<dbReference type="TreeFam" id="TF351641"/>
<dbReference type="Reactome" id="R-XTR-1912420">
    <property type="pathway name" value="Pre-NOTCH Processing in Golgi"/>
</dbReference>
<dbReference type="Reactome" id="R-XTR-2122948">
    <property type="pathway name" value="Activated NOTCH1 Transmits Signal to the Nucleus"/>
</dbReference>
<dbReference type="Reactome" id="R-XTR-2197563">
    <property type="pathway name" value="NOTCH2 intracellular domain regulates transcription"/>
</dbReference>
<dbReference type="Reactome" id="R-XTR-2979096">
    <property type="pathway name" value="NOTCH2 Activation and Transmission of Signal to the Nucleus"/>
</dbReference>
<dbReference type="Reactome" id="R-XTR-9013507">
    <property type="pathway name" value="NOTCH3 Activation and Transmission of Signal to the Nucleus"/>
</dbReference>
<dbReference type="Reactome" id="R-XTR-9017802">
    <property type="pathway name" value="Noncanonical activation of NOTCH3"/>
</dbReference>
<dbReference type="Proteomes" id="UP000008143">
    <property type="component" value="Chromosome 8"/>
</dbReference>
<dbReference type="GO" id="GO:0005634">
    <property type="term" value="C:nucleus"/>
    <property type="evidence" value="ECO:0007669"/>
    <property type="project" value="UniProtKB-SubCell"/>
</dbReference>
<dbReference type="GO" id="GO:0005886">
    <property type="term" value="C:plasma membrane"/>
    <property type="evidence" value="ECO:0007669"/>
    <property type="project" value="UniProtKB-SubCell"/>
</dbReference>
<dbReference type="GO" id="GO:0005509">
    <property type="term" value="F:calcium ion binding"/>
    <property type="evidence" value="ECO:0007669"/>
    <property type="project" value="InterPro"/>
</dbReference>
<dbReference type="GO" id="GO:0038023">
    <property type="term" value="F:signaling receptor activity"/>
    <property type="evidence" value="ECO:0007669"/>
    <property type="project" value="InterPro"/>
</dbReference>
<dbReference type="GO" id="GO:0001525">
    <property type="term" value="P:angiogenesis"/>
    <property type="evidence" value="ECO:0007669"/>
    <property type="project" value="UniProtKB-KW"/>
</dbReference>
<dbReference type="GO" id="GO:0030154">
    <property type="term" value="P:cell differentiation"/>
    <property type="evidence" value="ECO:0007669"/>
    <property type="project" value="UniProtKB-KW"/>
</dbReference>
<dbReference type="GO" id="GO:0060271">
    <property type="term" value="P:cilium assembly"/>
    <property type="evidence" value="ECO:0000315"/>
    <property type="project" value="UniProtKB"/>
</dbReference>
<dbReference type="GO" id="GO:0061314">
    <property type="term" value="P:Notch signaling involved in heart development"/>
    <property type="evidence" value="ECO:0000315"/>
    <property type="project" value="UniProtKB"/>
</dbReference>
<dbReference type="GO" id="GO:0050793">
    <property type="term" value="P:regulation of developmental process"/>
    <property type="evidence" value="ECO:0007669"/>
    <property type="project" value="InterPro"/>
</dbReference>
<dbReference type="GO" id="GO:0006355">
    <property type="term" value="P:regulation of DNA-templated transcription"/>
    <property type="evidence" value="ECO:0007669"/>
    <property type="project" value="InterPro"/>
</dbReference>
<dbReference type="CDD" id="cd00054">
    <property type="entry name" value="EGF_CA"/>
    <property type="match status" value="31"/>
</dbReference>
<dbReference type="CDD" id="cd21702">
    <property type="entry name" value="JMTM_Notch1"/>
    <property type="match status" value="1"/>
</dbReference>
<dbReference type="FunFam" id="2.10.25.10:FF:000151">
    <property type="entry name" value="FAT atypical cadherin 4"/>
    <property type="match status" value="1"/>
</dbReference>
<dbReference type="FunFam" id="1.25.40.20:FF:000005">
    <property type="entry name" value="Neurogenic locus notch 1"/>
    <property type="match status" value="1"/>
</dbReference>
<dbReference type="FunFam" id="2.10.25.10:FF:000004">
    <property type="entry name" value="Neurogenic locus notch 1"/>
    <property type="match status" value="8"/>
</dbReference>
<dbReference type="FunFam" id="2.10.25.10:FF:000080">
    <property type="entry name" value="Neurogenic locus notch 1"/>
    <property type="match status" value="2"/>
</dbReference>
<dbReference type="FunFam" id="2.10.25.10:FF:000136">
    <property type="entry name" value="Neurogenic locus notch 1"/>
    <property type="match status" value="1"/>
</dbReference>
<dbReference type="FunFam" id="2.10.25.10:FF:000279">
    <property type="entry name" value="Neurogenic locus notch 1"/>
    <property type="match status" value="1"/>
</dbReference>
<dbReference type="FunFam" id="3.30.300.320:FF:000001">
    <property type="entry name" value="Neurogenic locus notch 1"/>
    <property type="match status" value="1"/>
</dbReference>
<dbReference type="FunFam" id="3.30.70.3310:FF:000003">
    <property type="entry name" value="Neurogenic locus notch 1"/>
    <property type="match status" value="1"/>
</dbReference>
<dbReference type="FunFam" id="2.10.25.10:FF:000558">
    <property type="entry name" value="Neurogenic locus notch homolog protein 1"/>
    <property type="match status" value="1"/>
</dbReference>
<dbReference type="FunFam" id="2.10.25.10:FF:000955">
    <property type="entry name" value="Neurogenic locus notch homolog protein 1"/>
    <property type="match status" value="1"/>
</dbReference>
<dbReference type="FunFam" id="2.10.25.10:FF:000031">
    <property type="entry name" value="neurogenic locus notch homolog protein 3"/>
    <property type="match status" value="2"/>
</dbReference>
<dbReference type="FunFam" id="2.10.25.10:FF:000060">
    <property type="entry name" value="Neurogenic locus notch protein 1"/>
    <property type="match status" value="1"/>
</dbReference>
<dbReference type="FunFam" id="2.10.25.10:FF:000092">
    <property type="entry name" value="Neurogenic locus notch protein 1"/>
    <property type="match status" value="1"/>
</dbReference>
<dbReference type="FunFam" id="2.10.25.10:FF:000127">
    <property type="entry name" value="Neurogenic locus notch protein 1"/>
    <property type="match status" value="3"/>
</dbReference>
<dbReference type="FunFam" id="2.10.25.10:FF:000157">
    <property type="entry name" value="Neurogenic locus notch protein 1"/>
    <property type="match status" value="1"/>
</dbReference>
<dbReference type="FunFam" id="2.10.25.10:FF:000253">
    <property type="entry name" value="Neurogenic locus notch protein 1"/>
    <property type="match status" value="1"/>
</dbReference>
<dbReference type="FunFam" id="2.10.25.10:FF:000524">
    <property type="entry name" value="Neurogenic locus notch protein 1"/>
    <property type="match status" value="1"/>
</dbReference>
<dbReference type="FunFam" id="2.10.25.10:FF:000125">
    <property type="entry name" value="Neurogenic locus notch protein-like"/>
    <property type="match status" value="2"/>
</dbReference>
<dbReference type="FunFam" id="2.10.25.10:FF:000095">
    <property type="entry name" value="Notch, isoform B"/>
    <property type="match status" value="1"/>
</dbReference>
<dbReference type="FunFam" id="2.10.25.10:FF:000146">
    <property type="entry name" value="Putative neurogenic locus notch"/>
    <property type="match status" value="1"/>
</dbReference>
<dbReference type="FunFam" id="2.10.25.10:FF:000309">
    <property type="entry name" value="Uncharacterized protein, isoform A"/>
    <property type="match status" value="1"/>
</dbReference>
<dbReference type="FunFam" id="2.10.25.10:FF:000472">
    <property type="entry name" value="Uncharacterized protein, isoform A"/>
    <property type="match status" value="1"/>
</dbReference>
<dbReference type="FunFam" id="2.10.25.10:FF:000391">
    <property type="entry name" value="Weary, isoform C"/>
    <property type="match status" value="1"/>
</dbReference>
<dbReference type="Gene3D" id="3.30.300.320">
    <property type="match status" value="1"/>
</dbReference>
<dbReference type="Gene3D" id="3.30.70.3310">
    <property type="match status" value="1"/>
</dbReference>
<dbReference type="Gene3D" id="1.25.40.20">
    <property type="entry name" value="Ankyrin repeat-containing domain"/>
    <property type="match status" value="1"/>
</dbReference>
<dbReference type="Gene3D" id="2.10.25.10">
    <property type="entry name" value="Laminin"/>
    <property type="match status" value="35"/>
</dbReference>
<dbReference type="InterPro" id="IPR002110">
    <property type="entry name" value="Ankyrin_rpt"/>
</dbReference>
<dbReference type="InterPro" id="IPR036770">
    <property type="entry name" value="Ankyrin_rpt-contain_sf"/>
</dbReference>
<dbReference type="InterPro" id="IPR001881">
    <property type="entry name" value="EGF-like_Ca-bd_dom"/>
</dbReference>
<dbReference type="InterPro" id="IPR013032">
    <property type="entry name" value="EGF-like_CS"/>
</dbReference>
<dbReference type="InterPro" id="IPR000742">
    <property type="entry name" value="EGF-like_dom"/>
</dbReference>
<dbReference type="InterPro" id="IPR000152">
    <property type="entry name" value="EGF-type_Asp/Asn_hydroxyl_site"/>
</dbReference>
<dbReference type="InterPro" id="IPR018097">
    <property type="entry name" value="EGF_Ca-bd_CS"/>
</dbReference>
<dbReference type="InterPro" id="IPR009030">
    <property type="entry name" value="Growth_fac_rcpt_cys_sf"/>
</dbReference>
<dbReference type="InterPro" id="IPR008297">
    <property type="entry name" value="Notch"/>
</dbReference>
<dbReference type="InterPro" id="IPR035993">
    <property type="entry name" value="Notch-like_dom_sf"/>
</dbReference>
<dbReference type="InterPro" id="IPR049883">
    <property type="entry name" value="NOTCH1_EGF-like"/>
</dbReference>
<dbReference type="InterPro" id="IPR022362">
    <property type="entry name" value="Notch_1"/>
</dbReference>
<dbReference type="InterPro" id="IPR024600">
    <property type="entry name" value="Notch_C"/>
</dbReference>
<dbReference type="InterPro" id="IPR000800">
    <property type="entry name" value="Notch_dom"/>
</dbReference>
<dbReference type="InterPro" id="IPR010660">
    <property type="entry name" value="Notch_NOD_dom"/>
</dbReference>
<dbReference type="InterPro" id="IPR011656">
    <property type="entry name" value="Notch_NODP_dom"/>
</dbReference>
<dbReference type="PANTHER" id="PTHR12916">
    <property type="entry name" value="CYTOCHROME C OXIDASE POLYPEPTIDE VIC-2"/>
    <property type="match status" value="1"/>
</dbReference>
<dbReference type="PANTHER" id="PTHR12916:SF9">
    <property type="entry name" value="NEUROGENIC LOCUS NOTCH HOMOLOG PROTEIN 1-RELATED"/>
    <property type="match status" value="1"/>
</dbReference>
<dbReference type="Pfam" id="PF12796">
    <property type="entry name" value="Ank_2"/>
    <property type="match status" value="2"/>
</dbReference>
<dbReference type="Pfam" id="PF00008">
    <property type="entry name" value="EGF"/>
    <property type="match status" value="25"/>
</dbReference>
<dbReference type="Pfam" id="PF07645">
    <property type="entry name" value="EGF_CA"/>
    <property type="match status" value="3"/>
</dbReference>
<dbReference type="Pfam" id="PF12661">
    <property type="entry name" value="hEGF"/>
    <property type="match status" value="6"/>
</dbReference>
<dbReference type="Pfam" id="PF06816">
    <property type="entry name" value="NOD"/>
    <property type="match status" value="1"/>
</dbReference>
<dbReference type="Pfam" id="PF07684">
    <property type="entry name" value="NODP"/>
    <property type="match status" value="1"/>
</dbReference>
<dbReference type="Pfam" id="PF00066">
    <property type="entry name" value="Notch"/>
    <property type="match status" value="3"/>
</dbReference>
<dbReference type="PIRSF" id="PIRSF002279">
    <property type="entry name" value="Notch"/>
    <property type="match status" value="1"/>
</dbReference>
<dbReference type="PRINTS" id="PR00010">
    <property type="entry name" value="EGFBLOOD"/>
</dbReference>
<dbReference type="PRINTS" id="PR01452">
    <property type="entry name" value="LNOTCHREPEAT"/>
</dbReference>
<dbReference type="PRINTS" id="PR01983">
    <property type="entry name" value="NOTCH"/>
</dbReference>
<dbReference type="PRINTS" id="PR01984">
    <property type="entry name" value="NOTCH1"/>
</dbReference>
<dbReference type="SMART" id="SM00248">
    <property type="entry name" value="ANK"/>
    <property type="match status" value="6"/>
</dbReference>
<dbReference type="SMART" id="SM01334">
    <property type="entry name" value="DUF3454"/>
    <property type="match status" value="1"/>
</dbReference>
<dbReference type="SMART" id="SM00181">
    <property type="entry name" value="EGF"/>
    <property type="match status" value="36"/>
</dbReference>
<dbReference type="SMART" id="SM00179">
    <property type="entry name" value="EGF_CA"/>
    <property type="match status" value="33"/>
</dbReference>
<dbReference type="SMART" id="SM00004">
    <property type="entry name" value="NL"/>
    <property type="match status" value="3"/>
</dbReference>
<dbReference type="SMART" id="SM01338">
    <property type="entry name" value="NOD"/>
    <property type="match status" value="1"/>
</dbReference>
<dbReference type="SMART" id="SM01339">
    <property type="entry name" value="NODP"/>
    <property type="match status" value="1"/>
</dbReference>
<dbReference type="SUPFAM" id="SSF48403">
    <property type="entry name" value="Ankyrin repeat"/>
    <property type="match status" value="1"/>
</dbReference>
<dbReference type="SUPFAM" id="SSF57196">
    <property type="entry name" value="EGF/Laminin"/>
    <property type="match status" value="14"/>
</dbReference>
<dbReference type="SUPFAM" id="SSF57184">
    <property type="entry name" value="Growth factor receptor domain"/>
    <property type="match status" value="6"/>
</dbReference>
<dbReference type="SUPFAM" id="SSF90193">
    <property type="entry name" value="Notch domain"/>
    <property type="match status" value="3"/>
</dbReference>
<dbReference type="PROSITE" id="PS50297">
    <property type="entry name" value="ANK_REP_REGION"/>
    <property type="match status" value="1"/>
</dbReference>
<dbReference type="PROSITE" id="PS50088">
    <property type="entry name" value="ANK_REPEAT"/>
    <property type="match status" value="4"/>
</dbReference>
<dbReference type="PROSITE" id="PS00010">
    <property type="entry name" value="ASX_HYDROXYL"/>
    <property type="match status" value="23"/>
</dbReference>
<dbReference type="PROSITE" id="PS00022">
    <property type="entry name" value="EGF_1"/>
    <property type="match status" value="34"/>
</dbReference>
<dbReference type="PROSITE" id="PS01186">
    <property type="entry name" value="EGF_2"/>
    <property type="match status" value="29"/>
</dbReference>
<dbReference type="PROSITE" id="PS50026">
    <property type="entry name" value="EGF_3"/>
    <property type="match status" value="36"/>
</dbReference>
<dbReference type="PROSITE" id="PS01187">
    <property type="entry name" value="EGF_CA"/>
    <property type="match status" value="22"/>
</dbReference>
<dbReference type="PROSITE" id="PS50258">
    <property type="entry name" value="LNR"/>
    <property type="match status" value="3"/>
</dbReference>